<proteinExistence type="inferred from homology"/>
<protein>
    <recommendedName>
        <fullName evidence="1">S-adenosylmethionine synthase</fullName>
        <shortName evidence="1">AdoMet synthase</shortName>
        <ecNumber evidence="1">2.5.1.6</ecNumber>
    </recommendedName>
    <alternativeName>
        <fullName evidence="1">MAT</fullName>
    </alternativeName>
    <alternativeName>
        <fullName evidence="1">Methionine adenosyltransferase</fullName>
    </alternativeName>
</protein>
<organism>
    <name type="scientific">Escherichia coli O127:H6 (strain E2348/69 / EPEC)</name>
    <dbReference type="NCBI Taxonomy" id="574521"/>
    <lineage>
        <taxon>Bacteria</taxon>
        <taxon>Pseudomonadati</taxon>
        <taxon>Pseudomonadota</taxon>
        <taxon>Gammaproteobacteria</taxon>
        <taxon>Enterobacterales</taxon>
        <taxon>Enterobacteriaceae</taxon>
        <taxon>Escherichia</taxon>
    </lineage>
</organism>
<feature type="chain" id="PRO_1000196709" description="S-adenosylmethionine synthase">
    <location>
        <begin position="1"/>
        <end position="384"/>
    </location>
</feature>
<feature type="region of interest" description="Flexible loop" evidence="1">
    <location>
        <begin position="99"/>
        <end position="109"/>
    </location>
</feature>
<feature type="binding site" description="in other chain" evidence="1">
    <location>
        <position position="15"/>
    </location>
    <ligand>
        <name>ATP</name>
        <dbReference type="ChEBI" id="CHEBI:30616"/>
        <note>ligand shared between two neighboring subunits</note>
    </ligand>
</feature>
<feature type="binding site" evidence="1">
    <location>
        <position position="17"/>
    </location>
    <ligand>
        <name>Mg(2+)</name>
        <dbReference type="ChEBI" id="CHEBI:18420"/>
    </ligand>
</feature>
<feature type="binding site" evidence="1">
    <location>
        <position position="43"/>
    </location>
    <ligand>
        <name>K(+)</name>
        <dbReference type="ChEBI" id="CHEBI:29103"/>
    </ligand>
</feature>
<feature type="binding site" description="in other chain" evidence="1">
    <location>
        <position position="56"/>
    </location>
    <ligand>
        <name>L-methionine</name>
        <dbReference type="ChEBI" id="CHEBI:57844"/>
        <note>ligand shared between two neighboring subunits</note>
    </ligand>
</feature>
<feature type="binding site" description="in other chain" evidence="1">
    <location>
        <position position="99"/>
    </location>
    <ligand>
        <name>L-methionine</name>
        <dbReference type="ChEBI" id="CHEBI:57844"/>
        <note>ligand shared between two neighboring subunits</note>
    </ligand>
</feature>
<feature type="binding site" description="in other chain" evidence="1">
    <location>
        <begin position="164"/>
        <end position="166"/>
    </location>
    <ligand>
        <name>ATP</name>
        <dbReference type="ChEBI" id="CHEBI:30616"/>
        <note>ligand shared between two neighboring subunits</note>
    </ligand>
</feature>
<feature type="binding site" description="in other chain" evidence="1">
    <location>
        <begin position="230"/>
        <end position="231"/>
    </location>
    <ligand>
        <name>ATP</name>
        <dbReference type="ChEBI" id="CHEBI:30616"/>
        <note>ligand shared between two neighboring subunits</note>
    </ligand>
</feature>
<feature type="binding site" evidence="1">
    <location>
        <position position="239"/>
    </location>
    <ligand>
        <name>ATP</name>
        <dbReference type="ChEBI" id="CHEBI:30616"/>
        <note>ligand shared between two neighboring subunits</note>
    </ligand>
</feature>
<feature type="binding site" evidence="1">
    <location>
        <position position="239"/>
    </location>
    <ligand>
        <name>L-methionine</name>
        <dbReference type="ChEBI" id="CHEBI:57844"/>
        <note>ligand shared between two neighboring subunits</note>
    </ligand>
</feature>
<feature type="binding site" description="in other chain" evidence="1">
    <location>
        <begin position="245"/>
        <end position="246"/>
    </location>
    <ligand>
        <name>ATP</name>
        <dbReference type="ChEBI" id="CHEBI:30616"/>
        <note>ligand shared between two neighboring subunits</note>
    </ligand>
</feature>
<feature type="binding site" evidence="1">
    <location>
        <position position="262"/>
    </location>
    <ligand>
        <name>ATP</name>
        <dbReference type="ChEBI" id="CHEBI:30616"/>
        <note>ligand shared between two neighboring subunits</note>
    </ligand>
</feature>
<feature type="binding site" evidence="1">
    <location>
        <position position="266"/>
    </location>
    <ligand>
        <name>ATP</name>
        <dbReference type="ChEBI" id="CHEBI:30616"/>
        <note>ligand shared between two neighboring subunits</note>
    </ligand>
</feature>
<feature type="binding site" description="in other chain" evidence="1">
    <location>
        <position position="270"/>
    </location>
    <ligand>
        <name>L-methionine</name>
        <dbReference type="ChEBI" id="CHEBI:57844"/>
        <note>ligand shared between two neighboring subunits</note>
    </ligand>
</feature>
<sequence>MAKHLFTSESVSEGHPDKIADQISDAVLDAILEQDPKARVACETYVKTGMVLVGGEITTSAWVDIEEITRNTVREIGYVHSDMGFDANSCAVLSAIGKQSPDINQGVDRADPLEQGAGDQGLMFGYATNETDVLMPAPITYAHRLVQRQAEVRKNGTLPWLRPDAKSQVTFQYDDGKIVGIDAVVLSTQHSEEIDQKSLQEAVMEEIIKPILPAEWLTSATKFFINPTGRFVIGGPMGDCGLTGRKIIVDTYGGMARHGGGAFSGKDPSKVDRSAAYAARYVAKNIVAAGLADRCEIQVSYAIGVAEPTSIMVETFGTEKVPSEQLTLLVREFFDLRPYGLIQMLDLLHPIYKETAAYGHFGREHFPWEKTDKAQLLRDAAGLK</sequence>
<reference key="1">
    <citation type="journal article" date="2009" name="J. Bacteriol.">
        <title>Complete genome sequence and comparative genome analysis of enteropathogenic Escherichia coli O127:H6 strain E2348/69.</title>
        <authorList>
            <person name="Iguchi A."/>
            <person name="Thomson N.R."/>
            <person name="Ogura Y."/>
            <person name="Saunders D."/>
            <person name="Ooka T."/>
            <person name="Henderson I.R."/>
            <person name="Harris D."/>
            <person name="Asadulghani M."/>
            <person name="Kurokawa K."/>
            <person name="Dean P."/>
            <person name="Kenny B."/>
            <person name="Quail M.A."/>
            <person name="Thurston S."/>
            <person name="Dougan G."/>
            <person name="Hayashi T."/>
            <person name="Parkhill J."/>
            <person name="Frankel G."/>
        </authorList>
    </citation>
    <scope>NUCLEOTIDE SEQUENCE [LARGE SCALE GENOMIC DNA]</scope>
    <source>
        <strain>E2348/69 / EPEC</strain>
    </source>
</reference>
<comment type="function">
    <text evidence="1">Catalyzes the formation of S-adenosylmethionine (AdoMet) from methionine and ATP. The overall synthetic reaction is composed of two sequential steps, AdoMet formation and the subsequent tripolyphosphate hydrolysis which occurs prior to release of AdoMet from the enzyme.</text>
</comment>
<comment type="catalytic activity">
    <reaction evidence="1">
        <text>L-methionine + ATP + H2O = S-adenosyl-L-methionine + phosphate + diphosphate</text>
        <dbReference type="Rhea" id="RHEA:21080"/>
        <dbReference type="ChEBI" id="CHEBI:15377"/>
        <dbReference type="ChEBI" id="CHEBI:30616"/>
        <dbReference type="ChEBI" id="CHEBI:33019"/>
        <dbReference type="ChEBI" id="CHEBI:43474"/>
        <dbReference type="ChEBI" id="CHEBI:57844"/>
        <dbReference type="ChEBI" id="CHEBI:59789"/>
        <dbReference type="EC" id="2.5.1.6"/>
    </reaction>
</comment>
<comment type="cofactor">
    <cofactor evidence="1">
        <name>Mg(2+)</name>
        <dbReference type="ChEBI" id="CHEBI:18420"/>
    </cofactor>
    <text evidence="1">Binds 2 divalent ions per subunit.</text>
</comment>
<comment type="cofactor">
    <cofactor evidence="1">
        <name>K(+)</name>
        <dbReference type="ChEBI" id="CHEBI:29103"/>
    </cofactor>
    <text evidence="1">Binds 1 potassium ion per subunit.</text>
</comment>
<comment type="pathway">
    <text evidence="1">Amino-acid biosynthesis; S-adenosyl-L-methionine biosynthesis; S-adenosyl-L-methionine from L-methionine: step 1/1.</text>
</comment>
<comment type="subunit">
    <text evidence="1">Homotetramer; dimer of dimers.</text>
</comment>
<comment type="subcellular location">
    <subcellularLocation>
        <location evidence="1">Cytoplasm</location>
    </subcellularLocation>
</comment>
<comment type="similarity">
    <text evidence="1">Belongs to the AdoMet synthase family.</text>
</comment>
<dbReference type="EC" id="2.5.1.6" evidence="1"/>
<dbReference type="EMBL" id="FM180568">
    <property type="protein sequence ID" value="CAS10743.1"/>
    <property type="molecule type" value="Genomic_DNA"/>
</dbReference>
<dbReference type="RefSeq" id="WP_001062128.1">
    <property type="nucleotide sequence ID" value="NC_011601.1"/>
</dbReference>
<dbReference type="SMR" id="B7UHY9"/>
<dbReference type="GeneID" id="93779055"/>
<dbReference type="KEGG" id="ecg:E2348C_3195"/>
<dbReference type="HOGENOM" id="CLU_041802_1_1_6"/>
<dbReference type="UniPathway" id="UPA00315">
    <property type="reaction ID" value="UER00080"/>
</dbReference>
<dbReference type="Proteomes" id="UP000008205">
    <property type="component" value="Chromosome"/>
</dbReference>
<dbReference type="GO" id="GO:0005737">
    <property type="term" value="C:cytoplasm"/>
    <property type="evidence" value="ECO:0007669"/>
    <property type="project" value="UniProtKB-SubCell"/>
</dbReference>
<dbReference type="GO" id="GO:0005524">
    <property type="term" value="F:ATP binding"/>
    <property type="evidence" value="ECO:0007669"/>
    <property type="project" value="UniProtKB-UniRule"/>
</dbReference>
<dbReference type="GO" id="GO:0000287">
    <property type="term" value="F:magnesium ion binding"/>
    <property type="evidence" value="ECO:0007669"/>
    <property type="project" value="UniProtKB-UniRule"/>
</dbReference>
<dbReference type="GO" id="GO:0004478">
    <property type="term" value="F:methionine adenosyltransferase activity"/>
    <property type="evidence" value="ECO:0007669"/>
    <property type="project" value="UniProtKB-UniRule"/>
</dbReference>
<dbReference type="GO" id="GO:0006730">
    <property type="term" value="P:one-carbon metabolic process"/>
    <property type="evidence" value="ECO:0007669"/>
    <property type="project" value="UniProtKB-KW"/>
</dbReference>
<dbReference type="GO" id="GO:0006556">
    <property type="term" value="P:S-adenosylmethionine biosynthetic process"/>
    <property type="evidence" value="ECO:0007669"/>
    <property type="project" value="UniProtKB-UniRule"/>
</dbReference>
<dbReference type="CDD" id="cd18079">
    <property type="entry name" value="S-AdoMet_synt"/>
    <property type="match status" value="1"/>
</dbReference>
<dbReference type="FunFam" id="3.30.300.10:FF:000001">
    <property type="entry name" value="S-adenosylmethionine synthase"/>
    <property type="match status" value="1"/>
</dbReference>
<dbReference type="FunFam" id="3.30.300.10:FF:000003">
    <property type="entry name" value="S-adenosylmethionine synthase"/>
    <property type="match status" value="1"/>
</dbReference>
<dbReference type="Gene3D" id="3.30.300.10">
    <property type="match status" value="3"/>
</dbReference>
<dbReference type="HAMAP" id="MF_00086">
    <property type="entry name" value="S_AdoMet_synth1"/>
    <property type="match status" value="1"/>
</dbReference>
<dbReference type="InterPro" id="IPR022631">
    <property type="entry name" value="ADOMET_SYNTHASE_CS"/>
</dbReference>
<dbReference type="InterPro" id="IPR022630">
    <property type="entry name" value="S-AdoMet_synt_C"/>
</dbReference>
<dbReference type="InterPro" id="IPR022629">
    <property type="entry name" value="S-AdoMet_synt_central"/>
</dbReference>
<dbReference type="InterPro" id="IPR022628">
    <property type="entry name" value="S-AdoMet_synt_N"/>
</dbReference>
<dbReference type="InterPro" id="IPR002133">
    <property type="entry name" value="S-AdoMet_synthetase"/>
</dbReference>
<dbReference type="InterPro" id="IPR022636">
    <property type="entry name" value="S-AdoMet_synthetase_sfam"/>
</dbReference>
<dbReference type="NCBIfam" id="TIGR01034">
    <property type="entry name" value="metK"/>
    <property type="match status" value="1"/>
</dbReference>
<dbReference type="PANTHER" id="PTHR11964">
    <property type="entry name" value="S-ADENOSYLMETHIONINE SYNTHETASE"/>
    <property type="match status" value="1"/>
</dbReference>
<dbReference type="Pfam" id="PF02773">
    <property type="entry name" value="S-AdoMet_synt_C"/>
    <property type="match status" value="1"/>
</dbReference>
<dbReference type="Pfam" id="PF02772">
    <property type="entry name" value="S-AdoMet_synt_M"/>
    <property type="match status" value="1"/>
</dbReference>
<dbReference type="Pfam" id="PF00438">
    <property type="entry name" value="S-AdoMet_synt_N"/>
    <property type="match status" value="1"/>
</dbReference>
<dbReference type="PIRSF" id="PIRSF000497">
    <property type="entry name" value="MAT"/>
    <property type="match status" value="1"/>
</dbReference>
<dbReference type="SUPFAM" id="SSF55973">
    <property type="entry name" value="S-adenosylmethionine synthetase"/>
    <property type="match status" value="3"/>
</dbReference>
<dbReference type="PROSITE" id="PS00376">
    <property type="entry name" value="ADOMET_SYNTHASE_1"/>
    <property type="match status" value="1"/>
</dbReference>
<dbReference type="PROSITE" id="PS00377">
    <property type="entry name" value="ADOMET_SYNTHASE_2"/>
    <property type="match status" value="1"/>
</dbReference>
<evidence type="ECO:0000255" key="1">
    <source>
        <dbReference type="HAMAP-Rule" id="MF_00086"/>
    </source>
</evidence>
<gene>
    <name evidence="1" type="primary">metK</name>
    <name type="ordered locus">E2348C_3195</name>
</gene>
<accession>B7UHY9</accession>
<keyword id="KW-0067">ATP-binding</keyword>
<keyword id="KW-0963">Cytoplasm</keyword>
<keyword id="KW-0460">Magnesium</keyword>
<keyword id="KW-0479">Metal-binding</keyword>
<keyword id="KW-0547">Nucleotide-binding</keyword>
<keyword id="KW-0554">One-carbon metabolism</keyword>
<keyword id="KW-0630">Potassium</keyword>
<keyword id="KW-1185">Reference proteome</keyword>
<keyword id="KW-0808">Transferase</keyword>
<name>METK_ECO27</name>